<gene>
    <name evidence="1" type="primary">infA</name>
    <name type="ordered locus">MGAS10750_Spy0070</name>
</gene>
<name>IF1_STRPF</name>
<keyword id="KW-0963">Cytoplasm</keyword>
<keyword id="KW-0396">Initiation factor</keyword>
<keyword id="KW-0648">Protein biosynthesis</keyword>
<keyword id="KW-0694">RNA-binding</keyword>
<keyword id="KW-0699">rRNA-binding</keyword>
<feature type="chain" id="PRO_0000263886" description="Translation initiation factor IF-1">
    <location>
        <begin position="1"/>
        <end position="72"/>
    </location>
</feature>
<feature type="domain" description="S1-like" evidence="1">
    <location>
        <begin position="1"/>
        <end position="72"/>
    </location>
</feature>
<evidence type="ECO:0000255" key="1">
    <source>
        <dbReference type="HAMAP-Rule" id="MF_00075"/>
    </source>
</evidence>
<evidence type="ECO:0000305" key="2"/>
<protein>
    <recommendedName>
        <fullName evidence="1">Translation initiation factor IF-1</fullName>
    </recommendedName>
</protein>
<reference key="1">
    <citation type="journal article" date="2006" name="Proc. Natl. Acad. Sci. U.S.A.">
        <title>Molecular genetic anatomy of inter- and intraserotype variation in the human bacterial pathogen group A Streptococcus.</title>
        <authorList>
            <person name="Beres S.B."/>
            <person name="Richter E.W."/>
            <person name="Nagiec M.J."/>
            <person name="Sumby P."/>
            <person name="Porcella S.F."/>
            <person name="DeLeo F.R."/>
            <person name="Musser J.M."/>
        </authorList>
    </citation>
    <scope>NUCLEOTIDE SEQUENCE [LARGE SCALE GENOMIC DNA]</scope>
    <source>
        <strain>MGAS10750</strain>
    </source>
</reference>
<comment type="function">
    <text evidence="1">One of the essential components for the initiation of protein synthesis. Stabilizes the binding of IF-2 and IF-3 on the 30S subunit to which N-formylmethionyl-tRNA(fMet) subsequently binds. Helps modulate mRNA selection, yielding the 30S pre-initiation complex (PIC). Upon addition of the 50S ribosomal subunit IF-1, IF-2 and IF-3 are released leaving the mature 70S translation initiation complex.</text>
</comment>
<comment type="subunit">
    <text evidence="1">Component of the 30S ribosomal translation pre-initiation complex which assembles on the 30S ribosome in the order IF-2 and IF-3, IF-1 and N-formylmethionyl-tRNA(fMet); mRNA recruitment can occur at any time during PIC assembly.</text>
</comment>
<comment type="subcellular location">
    <subcellularLocation>
        <location evidence="1">Cytoplasm</location>
    </subcellularLocation>
</comment>
<comment type="similarity">
    <text evidence="1">Belongs to the IF-1 family.</text>
</comment>
<comment type="sequence caution" evidence="2">
    <conflict type="erroneous initiation">
        <sequence resource="EMBL-CDS" id="ABF37020"/>
    </conflict>
    <text>Extended N-terminus.</text>
</comment>
<organism>
    <name type="scientific">Streptococcus pyogenes serotype M4 (strain MGAS10750)</name>
    <dbReference type="NCBI Taxonomy" id="370554"/>
    <lineage>
        <taxon>Bacteria</taxon>
        <taxon>Bacillati</taxon>
        <taxon>Bacillota</taxon>
        <taxon>Bacilli</taxon>
        <taxon>Lactobacillales</taxon>
        <taxon>Streptococcaceae</taxon>
        <taxon>Streptococcus</taxon>
    </lineage>
</organism>
<accession>Q1J8Z1</accession>
<sequence>MAKEDVIEIEGKVVETMPNAMFTVELENGHQILATVSGKIRKNYIRILVGDRVTVEMSPYDLTRGRITYRFK</sequence>
<dbReference type="EMBL" id="CP000262">
    <property type="protein sequence ID" value="ABF37020.1"/>
    <property type="status" value="ALT_INIT"/>
    <property type="molecule type" value="Genomic_DNA"/>
</dbReference>
<dbReference type="SMR" id="Q1J8Z1"/>
<dbReference type="KEGG" id="spi:MGAS10750_Spy0070"/>
<dbReference type="HOGENOM" id="CLU_151267_1_0_9"/>
<dbReference type="Proteomes" id="UP000002434">
    <property type="component" value="Chromosome"/>
</dbReference>
<dbReference type="GO" id="GO:0005829">
    <property type="term" value="C:cytosol"/>
    <property type="evidence" value="ECO:0007669"/>
    <property type="project" value="TreeGrafter"/>
</dbReference>
<dbReference type="GO" id="GO:0043022">
    <property type="term" value="F:ribosome binding"/>
    <property type="evidence" value="ECO:0007669"/>
    <property type="project" value="UniProtKB-UniRule"/>
</dbReference>
<dbReference type="GO" id="GO:0019843">
    <property type="term" value="F:rRNA binding"/>
    <property type="evidence" value="ECO:0007669"/>
    <property type="project" value="UniProtKB-UniRule"/>
</dbReference>
<dbReference type="GO" id="GO:0003743">
    <property type="term" value="F:translation initiation factor activity"/>
    <property type="evidence" value="ECO:0007669"/>
    <property type="project" value="UniProtKB-UniRule"/>
</dbReference>
<dbReference type="CDD" id="cd04451">
    <property type="entry name" value="S1_IF1"/>
    <property type="match status" value="1"/>
</dbReference>
<dbReference type="FunFam" id="2.40.50.140:FF:000002">
    <property type="entry name" value="Translation initiation factor IF-1"/>
    <property type="match status" value="1"/>
</dbReference>
<dbReference type="Gene3D" id="2.40.50.140">
    <property type="entry name" value="Nucleic acid-binding proteins"/>
    <property type="match status" value="1"/>
</dbReference>
<dbReference type="HAMAP" id="MF_00075">
    <property type="entry name" value="IF_1"/>
    <property type="match status" value="1"/>
</dbReference>
<dbReference type="InterPro" id="IPR012340">
    <property type="entry name" value="NA-bd_OB-fold"/>
</dbReference>
<dbReference type="InterPro" id="IPR006196">
    <property type="entry name" value="RNA-binding_domain_S1_IF1"/>
</dbReference>
<dbReference type="InterPro" id="IPR003029">
    <property type="entry name" value="S1_domain"/>
</dbReference>
<dbReference type="InterPro" id="IPR004368">
    <property type="entry name" value="TIF_IF1"/>
</dbReference>
<dbReference type="NCBIfam" id="TIGR00008">
    <property type="entry name" value="infA"/>
    <property type="match status" value="1"/>
</dbReference>
<dbReference type="PANTHER" id="PTHR33370">
    <property type="entry name" value="TRANSLATION INITIATION FACTOR IF-1, CHLOROPLASTIC"/>
    <property type="match status" value="1"/>
</dbReference>
<dbReference type="PANTHER" id="PTHR33370:SF1">
    <property type="entry name" value="TRANSLATION INITIATION FACTOR IF-1, CHLOROPLASTIC"/>
    <property type="match status" value="1"/>
</dbReference>
<dbReference type="Pfam" id="PF01176">
    <property type="entry name" value="eIF-1a"/>
    <property type="match status" value="1"/>
</dbReference>
<dbReference type="SMART" id="SM00316">
    <property type="entry name" value="S1"/>
    <property type="match status" value="1"/>
</dbReference>
<dbReference type="SUPFAM" id="SSF50249">
    <property type="entry name" value="Nucleic acid-binding proteins"/>
    <property type="match status" value="1"/>
</dbReference>
<dbReference type="PROSITE" id="PS50832">
    <property type="entry name" value="S1_IF1_TYPE"/>
    <property type="match status" value="1"/>
</dbReference>
<proteinExistence type="inferred from homology"/>